<reference evidence="7" key="1">
    <citation type="journal article" date="2012" name="J. Biol. Chem.">
        <title>Novel Cyclotides and Uncyclotides with Highly Shortened Precursors from Chassalia chartacea and Effects of Methionine Oxidation on Bioactivities.</title>
        <authorList>
            <person name="Nguyen G.K."/>
            <person name="Lim W.H."/>
            <person name="Nguyen P.Q."/>
            <person name="Tam J.P."/>
        </authorList>
    </citation>
    <scope>NUCLEOTIDE SEQUENCE [GENOMIC DNA / MRNA]</scope>
    <scope>TISSUE SPECIFICITY</scope>
    <scope>MASS SPECTROMETRY</scope>
</reference>
<comment type="function">
    <text evidence="1 2">Probably participates in a plant defense mechanism.</text>
</comment>
<comment type="tissue specificity">
    <text evidence="3">Expressed in fruit and pedicel but not in root, leaf and stem (at protein level).</text>
</comment>
<comment type="domain">
    <text evidence="5">The presence of a 'disulfide through disulfide knot' structurally defines this protein as a knottin.</text>
</comment>
<comment type="PTM">
    <text evidence="2">This is a cyclic peptide.</text>
</comment>
<comment type="mass spectrometry"/>
<comment type="similarity">
    <text evidence="2">Belongs to the cyclotide family. Bracelet subfamily.</text>
</comment>
<organism>
    <name type="scientific">Chassalia chartacea</name>
    <name type="common">Chassalia curviflora</name>
    <dbReference type="NCBI Taxonomy" id="510798"/>
    <lineage>
        <taxon>Eukaryota</taxon>
        <taxon>Viridiplantae</taxon>
        <taxon>Streptophyta</taxon>
        <taxon>Embryophyta</taxon>
        <taxon>Tracheophyta</taxon>
        <taxon>Spermatophyta</taxon>
        <taxon>Magnoliopsida</taxon>
        <taxon>eudicotyledons</taxon>
        <taxon>Gunneridae</taxon>
        <taxon>Pentapetalae</taxon>
        <taxon>asterids</taxon>
        <taxon>lamiids</taxon>
        <taxon>Gentianales</taxon>
        <taxon>Rubiaceae</taxon>
        <taxon>Rubioideae</taxon>
        <taxon>Palicoureeae</taxon>
        <taxon>Chassalia</taxon>
    </lineage>
</organism>
<dbReference type="EMBL" id="JQ309966">
    <property type="protein sequence ID" value="AFH57356.1"/>
    <property type="molecule type" value="mRNA"/>
</dbReference>
<dbReference type="EMBL" id="JQ309972">
    <property type="protein sequence ID" value="AFH57362.1"/>
    <property type="molecule type" value="Genomic_DNA"/>
</dbReference>
<dbReference type="SMR" id="I0B6G2"/>
<dbReference type="GO" id="GO:0006952">
    <property type="term" value="P:defense response"/>
    <property type="evidence" value="ECO:0007669"/>
    <property type="project" value="UniProtKB-KW"/>
</dbReference>
<dbReference type="InterPro" id="IPR005535">
    <property type="entry name" value="Cyclotide"/>
</dbReference>
<dbReference type="InterPro" id="IPR012323">
    <property type="entry name" value="Cyclotide_bracelet_CS"/>
</dbReference>
<dbReference type="InterPro" id="IPR036146">
    <property type="entry name" value="Cyclotide_sf"/>
</dbReference>
<dbReference type="Pfam" id="PF03784">
    <property type="entry name" value="Cyclotide"/>
    <property type="match status" value="1"/>
</dbReference>
<dbReference type="SUPFAM" id="SSF57038">
    <property type="entry name" value="Cyclotides"/>
    <property type="match status" value="1"/>
</dbReference>
<dbReference type="PROSITE" id="PS51052">
    <property type="entry name" value="CYCLOTIDE"/>
    <property type="match status" value="1"/>
</dbReference>
<dbReference type="PROSITE" id="PS60008">
    <property type="entry name" value="CYCLOTIDE_BRACELET"/>
    <property type="match status" value="1"/>
</dbReference>
<accession>I0B6G2</accession>
<evidence type="ECO:0000255" key="1"/>
<evidence type="ECO:0000255" key="2">
    <source>
        <dbReference type="PROSITE-ProRule" id="PRU00395"/>
    </source>
</evidence>
<evidence type="ECO:0000269" key="3">
    <source>
    </source>
</evidence>
<evidence type="ECO:0000303" key="4">
    <source>
    </source>
</evidence>
<evidence type="ECO:0000305" key="5"/>
<evidence type="ECO:0000305" key="6">
    <source>
    </source>
</evidence>
<evidence type="ECO:0000312" key="7">
    <source>
        <dbReference type="EMBL" id="AFH57356.1"/>
    </source>
</evidence>
<name>CYC13_CHACT</name>
<proteinExistence type="evidence at protein level"/>
<sequence>MAKFATQLLLFVLIASLVMLEVHASNTFQVPDLGKRLLMNRDPNGFPCAESCVYIPCTVTALLGCSCRNRVCYRNEL</sequence>
<protein>
    <recommendedName>
        <fullName evidence="4">Chassatide C13</fullName>
    </recommendedName>
    <alternativeName>
        <fullName evidence="4">Cyclotide chaC13</fullName>
    </alternativeName>
</protein>
<feature type="signal peptide" evidence="1">
    <location>
        <begin position="1"/>
        <end position="24"/>
    </location>
</feature>
<feature type="propeptide" id="PRO_0000440235" description="Removed in mature form" evidence="6">
    <location>
        <begin position="25"/>
        <end position="44"/>
    </location>
</feature>
<feature type="peptide" id="PRO_0000440236" description="Chassatide C13" evidence="2 3">
    <location>
        <begin position="45"/>
        <end position="75"/>
    </location>
</feature>
<feature type="propeptide" id="PRO_0000440237" description="Removed in mature form" evidence="6">
    <location>
        <begin position="76"/>
        <end position="77"/>
    </location>
</feature>
<feature type="disulfide bond" evidence="2">
    <location>
        <begin position="48"/>
        <end position="65"/>
    </location>
</feature>
<feature type="disulfide bond" evidence="2">
    <location>
        <begin position="52"/>
        <end position="67"/>
    </location>
</feature>
<feature type="disulfide bond" evidence="2">
    <location>
        <begin position="57"/>
        <end position="72"/>
    </location>
</feature>
<feature type="cross-link" description="Cyclopeptide (Gly-Asn)" evidence="4">
    <location>
        <begin position="45"/>
        <end position="75"/>
    </location>
</feature>
<keyword id="KW-1015">Disulfide bond</keyword>
<keyword id="KW-0960">Knottin</keyword>
<keyword id="KW-0611">Plant defense</keyword>
<keyword id="KW-0732">Signal</keyword>